<protein>
    <recommendedName>
        <fullName evidence="4">Cytochrome P450 monooxygenase FPY7</fullName>
        <ecNumber evidence="6">1.-.-.-</ecNumber>
    </recommendedName>
    <alternativeName>
        <fullName evidence="4">Fusapyrone biosynthesis cluster protein 7</fullName>
    </alternativeName>
</protein>
<organism>
    <name type="scientific">Fusarium mangiferae</name>
    <name type="common">Mango malformation disease fungus</name>
    <dbReference type="NCBI Taxonomy" id="192010"/>
    <lineage>
        <taxon>Eukaryota</taxon>
        <taxon>Fungi</taxon>
        <taxon>Dikarya</taxon>
        <taxon>Ascomycota</taxon>
        <taxon>Pezizomycotina</taxon>
        <taxon>Sordariomycetes</taxon>
        <taxon>Hypocreomycetidae</taxon>
        <taxon>Hypocreales</taxon>
        <taxon>Nectriaceae</taxon>
        <taxon>Fusarium</taxon>
        <taxon>Fusarium fujikuroi species complex</taxon>
    </lineage>
</organism>
<gene>
    <name evidence="4" type="primary">FPY7</name>
    <name type="ORF">FMAN_00002</name>
</gene>
<accession>A0A1L7TV75</accession>
<keyword id="KW-0349">Heme</keyword>
<keyword id="KW-0408">Iron</keyword>
<keyword id="KW-0472">Membrane</keyword>
<keyword id="KW-0479">Metal-binding</keyword>
<keyword id="KW-0503">Monooxygenase</keyword>
<keyword id="KW-0560">Oxidoreductase</keyword>
<keyword id="KW-0812">Transmembrane</keyword>
<keyword id="KW-1133">Transmembrane helix</keyword>
<feature type="chain" id="PRO_0000458181" description="Cytochrome P450 monooxygenase FPY7">
    <location>
        <begin position="1"/>
        <end position="519"/>
    </location>
</feature>
<feature type="transmembrane region" description="Helical" evidence="2">
    <location>
        <begin position="12"/>
        <end position="34"/>
    </location>
</feature>
<feature type="binding site" description="axial binding residue" evidence="1">
    <location>
        <position position="465"/>
    </location>
    <ligand>
        <name>heme</name>
        <dbReference type="ChEBI" id="CHEBI:30413"/>
    </ligand>
    <ligandPart>
        <name>Fe</name>
        <dbReference type="ChEBI" id="CHEBI:18248"/>
    </ligandPart>
</feature>
<dbReference type="EC" id="1.-.-.-" evidence="6"/>
<dbReference type="EMBL" id="FCQH01000013">
    <property type="protein sequence ID" value="CVL02464.1"/>
    <property type="molecule type" value="Genomic_DNA"/>
</dbReference>
<dbReference type="SMR" id="A0A1L7TV75"/>
<dbReference type="VEuPathDB" id="FungiDB:FMAN_00002"/>
<dbReference type="Proteomes" id="UP000184255">
    <property type="component" value="Unassembled WGS sequence"/>
</dbReference>
<dbReference type="GO" id="GO:0016020">
    <property type="term" value="C:membrane"/>
    <property type="evidence" value="ECO:0007669"/>
    <property type="project" value="UniProtKB-SubCell"/>
</dbReference>
<dbReference type="GO" id="GO:0020037">
    <property type="term" value="F:heme binding"/>
    <property type="evidence" value="ECO:0007669"/>
    <property type="project" value="InterPro"/>
</dbReference>
<dbReference type="GO" id="GO:0005506">
    <property type="term" value="F:iron ion binding"/>
    <property type="evidence" value="ECO:0007669"/>
    <property type="project" value="InterPro"/>
</dbReference>
<dbReference type="GO" id="GO:0016712">
    <property type="term" value="F:oxidoreductase activity, acting on paired donors, with incorporation or reduction of molecular oxygen, reduced flavin or flavoprotein as one donor, and incorporation of one atom of oxygen"/>
    <property type="evidence" value="ECO:0007669"/>
    <property type="project" value="InterPro"/>
</dbReference>
<dbReference type="CDD" id="cd11063">
    <property type="entry name" value="CYP52"/>
    <property type="match status" value="1"/>
</dbReference>
<dbReference type="Gene3D" id="1.10.630.10">
    <property type="entry name" value="Cytochrome P450"/>
    <property type="match status" value="1"/>
</dbReference>
<dbReference type="InterPro" id="IPR001128">
    <property type="entry name" value="Cyt_P450"/>
</dbReference>
<dbReference type="InterPro" id="IPR017972">
    <property type="entry name" value="Cyt_P450_CS"/>
</dbReference>
<dbReference type="InterPro" id="IPR002974">
    <property type="entry name" value="Cyt_P450_E_CYP52_ascomycetes"/>
</dbReference>
<dbReference type="InterPro" id="IPR047146">
    <property type="entry name" value="Cyt_P450_E_CYP52_fungi"/>
</dbReference>
<dbReference type="InterPro" id="IPR002402">
    <property type="entry name" value="Cyt_P450_E_grp-II"/>
</dbReference>
<dbReference type="InterPro" id="IPR036396">
    <property type="entry name" value="Cyt_P450_sf"/>
</dbReference>
<dbReference type="PANTHER" id="PTHR24287">
    <property type="entry name" value="P450, PUTATIVE (EUROFUNG)-RELATED"/>
    <property type="match status" value="1"/>
</dbReference>
<dbReference type="PANTHER" id="PTHR24287:SF17">
    <property type="entry name" value="P450, PUTATIVE (EUROFUNG)-RELATED"/>
    <property type="match status" value="1"/>
</dbReference>
<dbReference type="Pfam" id="PF00067">
    <property type="entry name" value="p450"/>
    <property type="match status" value="1"/>
</dbReference>
<dbReference type="PRINTS" id="PR00464">
    <property type="entry name" value="EP450II"/>
</dbReference>
<dbReference type="PRINTS" id="PR01239">
    <property type="entry name" value="EP450IICYP52"/>
</dbReference>
<dbReference type="PRINTS" id="PR00385">
    <property type="entry name" value="P450"/>
</dbReference>
<dbReference type="SUPFAM" id="SSF48264">
    <property type="entry name" value="Cytochrome P450"/>
    <property type="match status" value="1"/>
</dbReference>
<dbReference type="PROSITE" id="PS00086">
    <property type="entry name" value="CYTOCHROME_P450"/>
    <property type="match status" value="1"/>
</dbReference>
<comment type="function">
    <text evidence="3 6">Cytochrome P450 monooxygenase; part of the gene cluster that mediates the biosynthesis of the gamma-pyrones fusapyrone (FPY) and deoxyfusapyrone (dFPY) (Ref.2). FPY is an undecaketide and thus likely synthesized by the polyketide synthase FPY1 from acetyl-CoA functioning as starter unit and the addition of 10 malonyl-CoA extender units by successive Claisen-condensations. Next to this, FPY shares some rare features: C-glycosylated 4-deoxyglucose at C-3, a gem-dimethyl group at C-13, and an alpha-beta to beta-gamma double bond shift at C-20. During FPY biosynthesis mono-C-methyl groups are transferred to the tetra-, penta-, hexa- and heptaketide, while two C-methyl groups are transferred to the nonaketide, suggesting that the CMet domain is programmed to selectively catalyze two successive C-alpha-methylation reactions of the nonaketide, while other alpha-carbons are non- or mono-methylated only. While the origin of the 4'-deoxyglucose moiety remains opaque, its transfer to C-3 is most likely mediated by the C-glycosyltransferase FPY2. Next to this, the hydroxyl group present at C-33 and discriminating between FPY and dFPY, is likely to be installed by the cytochrome P450 monooxygenase FPY7. No putative function can be predicted for the remaining genes FPY3-FPY6 (Probable).</text>
</comment>
<comment type="cofactor">
    <cofactor evidence="1">
        <name>heme</name>
        <dbReference type="ChEBI" id="CHEBI:30413"/>
    </cofactor>
</comment>
<comment type="pathway">
    <text evidence="6">Secondary metabolite biosynthesis.</text>
</comment>
<comment type="subcellular location">
    <subcellularLocation>
        <location evidence="2">Membrane</location>
        <topology evidence="2">Single-pass membrane protein</topology>
    </subcellularLocation>
</comment>
<comment type="induction">
    <text evidence="3">Expression is induced in the presence of 6mM glutamine.</text>
</comment>
<comment type="similarity">
    <text evidence="5">Belongs to the cytochrome P450 family.</text>
</comment>
<sequence>MAIIPWKAIDESLSLRWKIIVTLLAIYTLRIIGTRITTTRARRKFREQHGCAPVTCQLPLKDPFFGIDFILKLMRVFKEKRLLETFANDFYKTVGITFLVERGSQQTIFTIDPENIKTVLALKFKDYGLAFRAPLFNPVTGGGMFVSDGEEWAHSRALMRPTFARDQVADLALTNRHVTDLVSKIPINTTFNLQELLFDFTMDTGTEFLFGESTDTLCNPTKASQEFTKAFDFTLKDVAYQARLGPLRRFQGSRSKALEVYQVCRSYVERYVDQAMALRTSTLTGEVTRENEPQNRHDSLLRQLARSGVSKEKIRAELLSVLIAARDTTSNLLGNLFFVLARRPDIWTKIRDEVKHLDTNEPTYEQLRHLTYAKYCINESLRLHPPVPSNGRMAYRDTILPHGGGPNGDHPIHVPKGSMVNYTVYAMHRRKDLYGQDAEEFRPERWESLRPSWFFLPFNGGPRICLGQQYAITESLLVIMRFAQEFTSIQSMDAKPWTEEIALGCGNANGVYVSFQKLK</sequence>
<evidence type="ECO:0000250" key="1">
    <source>
        <dbReference type="UniProtKB" id="P04798"/>
    </source>
</evidence>
<evidence type="ECO:0000255" key="2"/>
<evidence type="ECO:0000269" key="3">
    <source ref="2"/>
</evidence>
<evidence type="ECO:0000303" key="4">
    <source ref="2"/>
</evidence>
<evidence type="ECO:0000305" key="5"/>
<evidence type="ECO:0000305" key="6">
    <source ref="2"/>
</evidence>
<name>FPY7_FUSMA</name>
<reference key="1">
    <citation type="journal article" date="2016" name="Genome Biol. Evol.">
        <title>Comparative 'omics' of the Fusarium fujikuroi species complex highlights differences in genetic potential and metabolite synthesis.</title>
        <authorList>
            <person name="Niehaus E.-M."/>
            <person name="Muensterkoetter M."/>
            <person name="Proctor R.H."/>
            <person name="Brown D.W."/>
            <person name="Sharon A."/>
            <person name="Idan Y."/>
            <person name="Oren-Young L."/>
            <person name="Sieber C.M."/>
            <person name="Novak O."/>
            <person name="Pencik A."/>
            <person name="Tarkowska D."/>
            <person name="Hromadova K."/>
            <person name="Freeman S."/>
            <person name="Maymon M."/>
            <person name="Elazar M."/>
            <person name="Youssef S.A."/>
            <person name="El-Shabrawy E.S.M."/>
            <person name="Shalaby A.B.A."/>
            <person name="Houterman P."/>
            <person name="Brock N.L."/>
            <person name="Burkhardt I."/>
            <person name="Tsavkelova E.A."/>
            <person name="Dickschat J.S."/>
            <person name="Galuszka P."/>
            <person name="Gueldener U."/>
            <person name="Tudzynski B."/>
        </authorList>
    </citation>
    <scope>NUCLEOTIDE SEQUENCE [LARGE SCALE GENOMIC DNA]</scope>
    <source>
        <strain>MRC7560</strain>
    </source>
</reference>
<reference key="2">
    <citation type="journal article" date="2021" name="Front. Fungal Biol.">
        <title>Biosynthesis of fusapyrone depends on the H3K9 methyltransferase, FmKmt1, in Fusarium mangiferae.</title>
        <authorList>
            <person name="Atanasoff-Kardjalieff A.K."/>
            <person name="Luenne F."/>
            <person name="Kalinina S."/>
            <person name="Strauss J."/>
            <person name="Humpf H.U."/>
            <person name="Studt-Reinhold L."/>
        </authorList>
    </citation>
    <scope>FUNCTION</scope>
    <scope>INDUCTION</scope>
</reference>
<proteinExistence type="evidence at transcript level"/>